<accession>C6DIC1</accession>
<dbReference type="EMBL" id="CP001657">
    <property type="protein sequence ID" value="ACT15115.1"/>
    <property type="molecule type" value="Genomic_DNA"/>
</dbReference>
<dbReference type="SMR" id="C6DIC1"/>
<dbReference type="STRING" id="561230.PC1_4100"/>
<dbReference type="KEGG" id="pct:PC1_4100"/>
<dbReference type="eggNOG" id="COG2003">
    <property type="taxonomic scope" value="Bacteria"/>
</dbReference>
<dbReference type="HOGENOM" id="CLU_073529_0_1_6"/>
<dbReference type="OrthoDB" id="9804482at2"/>
<dbReference type="Proteomes" id="UP000002736">
    <property type="component" value="Chromosome"/>
</dbReference>
<dbReference type="GO" id="GO:0046872">
    <property type="term" value="F:metal ion binding"/>
    <property type="evidence" value="ECO:0007669"/>
    <property type="project" value="UniProtKB-KW"/>
</dbReference>
<dbReference type="GO" id="GO:0008237">
    <property type="term" value="F:metallopeptidase activity"/>
    <property type="evidence" value="ECO:0007669"/>
    <property type="project" value="UniProtKB-KW"/>
</dbReference>
<dbReference type="GO" id="GO:0006508">
    <property type="term" value="P:proteolysis"/>
    <property type="evidence" value="ECO:0007669"/>
    <property type="project" value="UniProtKB-KW"/>
</dbReference>
<dbReference type="CDD" id="cd08071">
    <property type="entry name" value="MPN_DUF2466"/>
    <property type="match status" value="1"/>
</dbReference>
<dbReference type="Gene3D" id="3.40.140.10">
    <property type="entry name" value="Cytidine Deaminase, domain 2"/>
    <property type="match status" value="1"/>
</dbReference>
<dbReference type="HAMAP" id="MF_00018">
    <property type="entry name" value="UPF0758_YicR"/>
    <property type="match status" value="1"/>
</dbReference>
<dbReference type="InterPro" id="IPR037518">
    <property type="entry name" value="MPN"/>
</dbReference>
<dbReference type="InterPro" id="IPR025657">
    <property type="entry name" value="RadC_JAB"/>
</dbReference>
<dbReference type="InterPro" id="IPR010994">
    <property type="entry name" value="RuvA_2-like"/>
</dbReference>
<dbReference type="InterPro" id="IPR001405">
    <property type="entry name" value="UPF0758"/>
</dbReference>
<dbReference type="InterPro" id="IPR020891">
    <property type="entry name" value="UPF0758_CS"/>
</dbReference>
<dbReference type="InterPro" id="IPR046778">
    <property type="entry name" value="UPF0758_N"/>
</dbReference>
<dbReference type="InterPro" id="IPR022820">
    <property type="entry name" value="UPF0758_YicR"/>
</dbReference>
<dbReference type="NCBIfam" id="NF000642">
    <property type="entry name" value="PRK00024.1"/>
    <property type="match status" value="1"/>
</dbReference>
<dbReference type="NCBIfam" id="TIGR00608">
    <property type="entry name" value="radc"/>
    <property type="match status" value="1"/>
</dbReference>
<dbReference type="PANTHER" id="PTHR30471">
    <property type="entry name" value="DNA REPAIR PROTEIN RADC"/>
    <property type="match status" value="1"/>
</dbReference>
<dbReference type="PANTHER" id="PTHR30471:SF3">
    <property type="entry name" value="UPF0758 PROTEIN YEES-RELATED"/>
    <property type="match status" value="1"/>
</dbReference>
<dbReference type="Pfam" id="PF04002">
    <property type="entry name" value="RadC"/>
    <property type="match status" value="1"/>
</dbReference>
<dbReference type="Pfam" id="PF20582">
    <property type="entry name" value="UPF0758_N"/>
    <property type="match status" value="1"/>
</dbReference>
<dbReference type="SUPFAM" id="SSF102712">
    <property type="entry name" value="JAB1/MPN domain"/>
    <property type="match status" value="1"/>
</dbReference>
<dbReference type="SUPFAM" id="SSF47781">
    <property type="entry name" value="RuvA domain 2-like"/>
    <property type="match status" value="1"/>
</dbReference>
<dbReference type="PROSITE" id="PS50249">
    <property type="entry name" value="MPN"/>
    <property type="match status" value="1"/>
</dbReference>
<dbReference type="PROSITE" id="PS01302">
    <property type="entry name" value="UPF0758"/>
    <property type="match status" value="1"/>
</dbReference>
<name>Y4100_PECCP</name>
<gene>
    <name type="ordered locus">PC1_4100</name>
</gene>
<reference key="1">
    <citation type="submission" date="2009-07" db="EMBL/GenBank/DDBJ databases">
        <title>Complete sequence of Pectobacterium carotovorum subsp. carotovorum PC1.</title>
        <authorList>
            <consortium name="US DOE Joint Genome Institute"/>
            <person name="Lucas S."/>
            <person name="Copeland A."/>
            <person name="Lapidus A."/>
            <person name="Glavina del Rio T."/>
            <person name="Tice H."/>
            <person name="Bruce D."/>
            <person name="Goodwin L."/>
            <person name="Pitluck S."/>
            <person name="Munk A.C."/>
            <person name="Brettin T."/>
            <person name="Detter J.C."/>
            <person name="Han C."/>
            <person name="Tapia R."/>
            <person name="Larimer F."/>
            <person name="Land M."/>
            <person name="Hauser L."/>
            <person name="Kyrpides N."/>
            <person name="Mikhailova N."/>
            <person name="Balakrishnan V."/>
            <person name="Glasner J."/>
            <person name="Perna N.T."/>
        </authorList>
    </citation>
    <scope>NUCLEOTIDE SEQUENCE [LARGE SCALE GENOMIC DNA]</scope>
    <source>
        <strain>PC1</strain>
    </source>
</reference>
<proteinExistence type="inferred from homology"/>
<keyword id="KW-0378">Hydrolase</keyword>
<keyword id="KW-0479">Metal-binding</keyword>
<keyword id="KW-0482">Metalloprotease</keyword>
<keyword id="KW-0645">Protease</keyword>
<keyword id="KW-0862">Zinc</keyword>
<feature type="chain" id="PRO_1000201879" description="UPF0758 protein PC1_4100">
    <location>
        <begin position="1"/>
        <end position="221"/>
    </location>
</feature>
<feature type="domain" description="MPN" evidence="2">
    <location>
        <begin position="99"/>
        <end position="221"/>
    </location>
</feature>
<feature type="short sequence motif" description="JAMM motif" evidence="2">
    <location>
        <begin position="170"/>
        <end position="183"/>
    </location>
</feature>
<feature type="binding site" evidence="2">
    <location>
        <position position="170"/>
    </location>
    <ligand>
        <name>Zn(2+)</name>
        <dbReference type="ChEBI" id="CHEBI:29105"/>
        <note>catalytic</note>
    </ligand>
</feature>
<feature type="binding site" evidence="2">
    <location>
        <position position="172"/>
    </location>
    <ligand>
        <name>Zn(2+)</name>
        <dbReference type="ChEBI" id="CHEBI:29105"/>
        <note>catalytic</note>
    </ligand>
</feature>
<feature type="binding site" evidence="2">
    <location>
        <position position="183"/>
    </location>
    <ligand>
        <name>Zn(2+)</name>
        <dbReference type="ChEBI" id="CHEBI:29105"/>
        <note>catalytic</note>
    </ligand>
</feature>
<organism>
    <name type="scientific">Pectobacterium carotovorum subsp. carotovorum (strain PC1)</name>
    <dbReference type="NCBI Taxonomy" id="561230"/>
    <lineage>
        <taxon>Bacteria</taxon>
        <taxon>Pseudomonadati</taxon>
        <taxon>Pseudomonadota</taxon>
        <taxon>Gammaproteobacteria</taxon>
        <taxon>Enterobacterales</taxon>
        <taxon>Pectobacteriaceae</taxon>
        <taxon>Pectobacterium</taxon>
    </lineage>
</organism>
<evidence type="ECO:0000255" key="1">
    <source>
        <dbReference type="HAMAP-Rule" id="MF_00018"/>
    </source>
</evidence>
<evidence type="ECO:0000255" key="2">
    <source>
        <dbReference type="PROSITE-ProRule" id="PRU01182"/>
    </source>
</evidence>
<sequence>MGWEKGLAPREKLVRLGAESLTDVELLAIFLRTGLPGVHVMQLAEDLLVQFGSLYQLMTADQSAFRTAKGVGISKYTQIKAIAELSRRLFFSRLAKEDAMLNPQATGQYLQLLLSRREREVFLVLFLDNQHHVIRHQEMFVGTINSVEVHPREIVREALKANAAALILAHNHPSGKAEPSQADRAITEQIVKACLLMEIRVLDHLVIGHGEYVSFAERGWI</sequence>
<protein>
    <recommendedName>
        <fullName evidence="1">UPF0758 protein PC1_4100</fullName>
    </recommendedName>
</protein>
<comment type="similarity">
    <text evidence="1">Belongs to the UPF0758 family. YicR subfamily.</text>
</comment>